<comment type="function">
    <text evidence="1">Catalyzes the reversible formation of acyl-phosphate (acyl-PO(4)) from acyl-[acyl-carrier-protein] (acyl-ACP). This enzyme utilizes acyl-ACP as fatty acyl donor, but not acyl-CoA.</text>
</comment>
<comment type="catalytic activity">
    <reaction evidence="1">
        <text>a fatty acyl-[ACP] + phosphate = an acyl phosphate + holo-[ACP]</text>
        <dbReference type="Rhea" id="RHEA:42292"/>
        <dbReference type="Rhea" id="RHEA-COMP:9685"/>
        <dbReference type="Rhea" id="RHEA-COMP:14125"/>
        <dbReference type="ChEBI" id="CHEBI:43474"/>
        <dbReference type="ChEBI" id="CHEBI:59918"/>
        <dbReference type="ChEBI" id="CHEBI:64479"/>
        <dbReference type="ChEBI" id="CHEBI:138651"/>
        <dbReference type="EC" id="2.3.1.274"/>
    </reaction>
</comment>
<comment type="pathway">
    <text evidence="1">Lipid metabolism; phospholipid metabolism.</text>
</comment>
<comment type="subunit">
    <text evidence="1">Homodimer. Probably interacts with PlsY.</text>
</comment>
<comment type="subcellular location">
    <subcellularLocation>
        <location evidence="1">Cytoplasm</location>
    </subcellularLocation>
    <text evidence="1">Associated with the membrane possibly through PlsY.</text>
</comment>
<comment type="similarity">
    <text evidence="1">Belongs to the PlsX family.</text>
</comment>
<name>PLSX_YERE8</name>
<proteinExistence type="inferred from homology"/>
<feature type="chain" id="PRO_1000001861" description="Phosphate acyltransferase">
    <location>
        <begin position="1"/>
        <end position="344"/>
    </location>
</feature>
<keyword id="KW-0963">Cytoplasm</keyword>
<keyword id="KW-0444">Lipid biosynthesis</keyword>
<keyword id="KW-0443">Lipid metabolism</keyword>
<keyword id="KW-0594">Phospholipid biosynthesis</keyword>
<keyword id="KW-1208">Phospholipid metabolism</keyword>
<keyword id="KW-0808">Transferase</keyword>
<accession>A1JN63</accession>
<organism>
    <name type="scientific">Yersinia enterocolitica serotype O:8 / biotype 1B (strain NCTC 13174 / 8081)</name>
    <dbReference type="NCBI Taxonomy" id="393305"/>
    <lineage>
        <taxon>Bacteria</taxon>
        <taxon>Pseudomonadati</taxon>
        <taxon>Pseudomonadota</taxon>
        <taxon>Gammaproteobacteria</taxon>
        <taxon>Enterobacterales</taxon>
        <taxon>Yersiniaceae</taxon>
        <taxon>Yersinia</taxon>
    </lineage>
</organism>
<dbReference type="EC" id="2.3.1.274" evidence="1"/>
<dbReference type="EMBL" id="AM286415">
    <property type="protein sequence ID" value="CAL11706.1"/>
    <property type="molecule type" value="Genomic_DNA"/>
</dbReference>
<dbReference type="RefSeq" id="WP_005170740.1">
    <property type="nucleotide sequence ID" value="NC_008800.1"/>
</dbReference>
<dbReference type="RefSeq" id="YP_001005921.1">
    <property type="nucleotide sequence ID" value="NC_008800.1"/>
</dbReference>
<dbReference type="SMR" id="A1JN63"/>
<dbReference type="KEGG" id="yen:YE1632"/>
<dbReference type="PATRIC" id="fig|393305.7.peg.1770"/>
<dbReference type="eggNOG" id="COG0416">
    <property type="taxonomic scope" value="Bacteria"/>
</dbReference>
<dbReference type="HOGENOM" id="CLU_039379_1_0_6"/>
<dbReference type="OrthoDB" id="9806408at2"/>
<dbReference type="UniPathway" id="UPA00085"/>
<dbReference type="Proteomes" id="UP000000642">
    <property type="component" value="Chromosome"/>
</dbReference>
<dbReference type="GO" id="GO:0005737">
    <property type="term" value="C:cytoplasm"/>
    <property type="evidence" value="ECO:0007669"/>
    <property type="project" value="UniProtKB-SubCell"/>
</dbReference>
<dbReference type="GO" id="GO:0043811">
    <property type="term" value="F:phosphate:acyl-[acyl carrier protein] acyltransferase activity"/>
    <property type="evidence" value="ECO:0007669"/>
    <property type="project" value="UniProtKB-UniRule"/>
</dbReference>
<dbReference type="GO" id="GO:0006633">
    <property type="term" value="P:fatty acid biosynthetic process"/>
    <property type="evidence" value="ECO:0007669"/>
    <property type="project" value="UniProtKB-UniRule"/>
</dbReference>
<dbReference type="GO" id="GO:0008654">
    <property type="term" value="P:phospholipid biosynthetic process"/>
    <property type="evidence" value="ECO:0007669"/>
    <property type="project" value="UniProtKB-KW"/>
</dbReference>
<dbReference type="FunFam" id="3.40.718.10:FF:000008">
    <property type="entry name" value="Phosphate acyltransferase"/>
    <property type="match status" value="1"/>
</dbReference>
<dbReference type="Gene3D" id="3.40.718.10">
    <property type="entry name" value="Isopropylmalate Dehydrogenase"/>
    <property type="match status" value="1"/>
</dbReference>
<dbReference type="HAMAP" id="MF_00019">
    <property type="entry name" value="PlsX"/>
    <property type="match status" value="1"/>
</dbReference>
<dbReference type="InterPro" id="IPR003664">
    <property type="entry name" value="FA_synthesis"/>
</dbReference>
<dbReference type="InterPro" id="IPR012281">
    <property type="entry name" value="Phospholipid_synth_PlsX-like"/>
</dbReference>
<dbReference type="NCBIfam" id="TIGR00182">
    <property type="entry name" value="plsX"/>
    <property type="match status" value="1"/>
</dbReference>
<dbReference type="PANTHER" id="PTHR30100">
    <property type="entry name" value="FATTY ACID/PHOSPHOLIPID SYNTHESIS PROTEIN PLSX"/>
    <property type="match status" value="1"/>
</dbReference>
<dbReference type="PANTHER" id="PTHR30100:SF1">
    <property type="entry name" value="PHOSPHATE ACYLTRANSFERASE"/>
    <property type="match status" value="1"/>
</dbReference>
<dbReference type="Pfam" id="PF02504">
    <property type="entry name" value="FA_synthesis"/>
    <property type="match status" value="1"/>
</dbReference>
<dbReference type="PIRSF" id="PIRSF002465">
    <property type="entry name" value="Phsphlp_syn_PlsX"/>
    <property type="match status" value="1"/>
</dbReference>
<dbReference type="SUPFAM" id="SSF53659">
    <property type="entry name" value="Isocitrate/Isopropylmalate dehydrogenase-like"/>
    <property type="match status" value="1"/>
</dbReference>
<protein>
    <recommendedName>
        <fullName evidence="1">Phosphate acyltransferase</fullName>
        <ecNumber evidence="1">2.3.1.274</ecNumber>
    </recommendedName>
    <alternativeName>
        <fullName evidence="1">Acyl-ACP phosphotransacylase</fullName>
    </alternativeName>
    <alternativeName>
        <fullName evidence="1">Acyl-[acyl-carrier-protein]--phosphate acyltransferase</fullName>
    </alternativeName>
    <alternativeName>
        <fullName evidence="1">Phosphate-acyl-ACP acyltransferase</fullName>
    </alternativeName>
</protein>
<gene>
    <name evidence="1" type="primary">plsX</name>
    <name type="ordered locus">YE1632</name>
</gene>
<evidence type="ECO:0000255" key="1">
    <source>
        <dbReference type="HAMAP-Rule" id="MF_00019"/>
    </source>
</evidence>
<reference key="1">
    <citation type="journal article" date="2006" name="PLoS Genet.">
        <title>The complete genome sequence and comparative genome analysis of the high pathogenicity Yersinia enterocolitica strain 8081.</title>
        <authorList>
            <person name="Thomson N.R."/>
            <person name="Howard S."/>
            <person name="Wren B.W."/>
            <person name="Holden M.T.G."/>
            <person name="Crossman L."/>
            <person name="Challis G.L."/>
            <person name="Churcher C."/>
            <person name="Mungall K."/>
            <person name="Brooks K."/>
            <person name="Chillingworth T."/>
            <person name="Feltwell T."/>
            <person name="Abdellah Z."/>
            <person name="Hauser H."/>
            <person name="Jagels K."/>
            <person name="Maddison M."/>
            <person name="Moule S."/>
            <person name="Sanders M."/>
            <person name="Whitehead S."/>
            <person name="Quail M.A."/>
            <person name="Dougan G."/>
            <person name="Parkhill J."/>
            <person name="Prentice M.B."/>
        </authorList>
    </citation>
    <scope>NUCLEOTIDE SEQUENCE [LARGE SCALE GENOMIC DNA]</scope>
    <source>
        <strain>NCTC 13174 / 8081</strain>
    </source>
</reference>
<sequence length="344" mass="36748">MTCLTLALDAMGGDFGPHVTVPASLQALASNPKLKLLLVGNPDTITSLLVNADPLLLERLQVIPAEHVIAGDAKPSQAIRASRGTSMRIALELVKNGDAAACVSAGNTGALMGLAKMMIKPLDGIERPALMTVIPNQQRSKTVVLDLGANVECDSTMLVQFAVMGSVMAEEVVGITNPRVALLNIGEEETKGLDNIREAAAVLKNTPTINYIGYLEGNDLLTGKTDVMVCDGFVGNVTLKTMEGVIRMFLSLLKSSGEGKKQSWWLKLIGRWLQKRVAKRFGHLNPDQYNGACLLGLRGIVIKSHGAANQRAFAVAIEQAVQAVQRQVPQRIAARLEAVLPKSD</sequence>